<accession>B5F4E2</accession>
<name>FADR_SALA4</name>
<keyword id="KW-0010">Activator</keyword>
<keyword id="KW-0963">Cytoplasm</keyword>
<keyword id="KW-0238">DNA-binding</keyword>
<keyword id="KW-0276">Fatty acid metabolism</keyword>
<keyword id="KW-0443">Lipid metabolism</keyword>
<keyword id="KW-0678">Repressor</keyword>
<keyword id="KW-0804">Transcription</keyword>
<keyword id="KW-0805">Transcription regulation</keyword>
<feature type="chain" id="PRO_1000132324" description="Fatty acid metabolism regulator protein">
    <location>
        <begin position="1"/>
        <end position="239"/>
    </location>
</feature>
<feature type="domain" description="HTH gntR-type" evidence="1">
    <location>
        <begin position="6"/>
        <end position="74"/>
    </location>
</feature>
<feature type="DNA-binding region" description="H-T-H motif" evidence="1">
    <location>
        <begin position="34"/>
        <end position="53"/>
    </location>
</feature>
<evidence type="ECO:0000255" key="1">
    <source>
        <dbReference type="HAMAP-Rule" id="MF_00696"/>
    </source>
</evidence>
<gene>
    <name evidence="1" type="primary">fadR</name>
    <name type="ordered locus">SeAg_B1328</name>
</gene>
<protein>
    <recommendedName>
        <fullName evidence="1">Fatty acid metabolism regulator protein</fullName>
    </recommendedName>
</protein>
<comment type="function">
    <text evidence="1">Multifunctional regulator of fatty acid metabolism.</text>
</comment>
<comment type="subunit">
    <text evidence="1">Homodimer.</text>
</comment>
<comment type="subcellular location">
    <subcellularLocation>
        <location evidence="1">Cytoplasm</location>
    </subcellularLocation>
</comment>
<proteinExistence type="inferred from homology"/>
<sequence length="239" mass="26987">MVIKAQSPAGFAEEYIIESIWNNRFPPGTILPAERELSELIGVTRTTLREVLQRLARDGWLTIQHGKPTKVNNFWETSGLNILETLARLDHESVPQLIDNLLSVRTNISTIFIRTALRQHPDKAQEVLATAHEVADHADAFADLDYNIFRGLAFASGNPIYGLILNGMKGLYTRIGRHYFANPEARSLALGFYHKLSSLCEQGAHDQVYETVRRYGHDSGEIWHRMQKNLPGDLAIQGR</sequence>
<dbReference type="EMBL" id="CP001138">
    <property type="protein sequence ID" value="ACH49551.1"/>
    <property type="molecule type" value="Genomic_DNA"/>
</dbReference>
<dbReference type="RefSeq" id="WP_000234826.1">
    <property type="nucleotide sequence ID" value="NC_011149.1"/>
</dbReference>
<dbReference type="SMR" id="B5F4E2"/>
<dbReference type="KEGG" id="sea:SeAg_B1328"/>
<dbReference type="HOGENOM" id="CLU_017584_9_4_6"/>
<dbReference type="Proteomes" id="UP000008819">
    <property type="component" value="Chromosome"/>
</dbReference>
<dbReference type="GO" id="GO:0005737">
    <property type="term" value="C:cytoplasm"/>
    <property type="evidence" value="ECO:0007669"/>
    <property type="project" value="UniProtKB-SubCell"/>
</dbReference>
<dbReference type="GO" id="GO:0003677">
    <property type="term" value="F:DNA binding"/>
    <property type="evidence" value="ECO:0007669"/>
    <property type="project" value="UniProtKB-KW"/>
</dbReference>
<dbReference type="GO" id="GO:0003700">
    <property type="term" value="F:DNA-binding transcription factor activity"/>
    <property type="evidence" value="ECO:0007669"/>
    <property type="project" value="UniProtKB-UniRule"/>
</dbReference>
<dbReference type="GO" id="GO:0000062">
    <property type="term" value="F:fatty-acyl-CoA binding"/>
    <property type="evidence" value="ECO:0007669"/>
    <property type="project" value="InterPro"/>
</dbReference>
<dbReference type="GO" id="GO:0006631">
    <property type="term" value="P:fatty acid metabolic process"/>
    <property type="evidence" value="ECO:0007669"/>
    <property type="project" value="UniProtKB-KW"/>
</dbReference>
<dbReference type="GO" id="GO:0019217">
    <property type="term" value="P:regulation of fatty acid metabolic process"/>
    <property type="evidence" value="ECO:0007669"/>
    <property type="project" value="UniProtKB-UniRule"/>
</dbReference>
<dbReference type="CDD" id="cd07377">
    <property type="entry name" value="WHTH_GntR"/>
    <property type="match status" value="1"/>
</dbReference>
<dbReference type="FunFam" id="1.10.10.10:FF:000036">
    <property type="entry name" value="Fatty acid metabolism regulator protein"/>
    <property type="match status" value="1"/>
</dbReference>
<dbReference type="FunFam" id="1.20.120.530:FF:000003">
    <property type="entry name" value="Fatty acid metabolism regulator protein"/>
    <property type="match status" value="1"/>
</dbReference>
<dbReference type="Gene3D" id="1.20.120.530">
    <property type="entry name" value="GntR ligand-binding domain-like"/>
    <property type="match status" value="1"/>
</dbReference>
<dbReference type="Gene3D" id="1.10.10.10">
    <property type="entry name" value="Winged helix-like DNA-binding domain superfamily/Winged helix DNA-binding domain"/>
    <property type="match status" value="1"/>
</dbReference>
<dbReference type="HAMAP" id="MF_00696">
    <property type="entry name" value="HTH_FadR"/>
    <property type="match status" value="1"/>
</dbReference>
<dbReference type="InterPro" id="IPR014178">
    <property type="entry name" value="FA-response_TF_FadR"/>
</dbReference>
<dbReference type="InterPro" id="IPR028374">
    <property type="entry name" value="FadR_C"/>
</dbReference>
<dbReference type="InterPro" id="IPR008920">
    <property type="entry name" value="TF_FadR/GntR_C"/>
</dbReference>
<dbReference type="InterPro" id="IPR000524">
    <property type="entry name" value="Tscrpt_reg_HTH_GntR"/>
</dbReference>
<dbReference type="InterPro" id="IPR036388">
    <property type="entry name" value="WH-like_DNA-bd_sf"/>
</dbReference>
<dbReference type="InterPro" id="IPR036390">
    <property type="entry name" value="WH_DNA-bd_sf"/>
</dbReference>
<dbReference type="NCBIfam" id="TIGR02812">
    <property type="entry name" value="fadR_gamma"/>
    <property type="match status" value="1"/>
</dbReference>
<dbReference type="NCBIfam" id="NF003444">
    <property type="entry name" value="PRK04984.1"/>
    <property type="match status" value="1"/>
</dbReference>
<dbReference type="PANTHER" id="PTHR43537:SF52">
    <property type="entry name" value="FATTY ACID METABOLISM REGULATOR PROTEIN"/>
    <property type="match status" value="1"/>
</dbReference>
<dbReference type="PANTHER" id="PTHR43537">
    <property type="entry name" value="TRANSCRIPTIONAL REGULATOR, GNTR FAMILY"/>
    <property type="match status" value="1"/>
</dbReference>
<dbReference type="Pfam" id="PF07840">
    <property type="entry name" value="FadR_C"/>
    <property type="match status" value="1"/>
</dbReference>
<dbReference type="Pfam" id="PF00392">
    <property type="entry name" value="GntR"/>
    <property type="match status" value="1"/>
</dbReference>
<dbReference type="PRINTS" id="PR00035">
    <property type="entry name" value="HTHGNTR"/>
</dbReference>
<dbReference type="SMART" id="SM00345">
    <property type="entry name" value="HTH_GNTR"/>
    <property type="match status" value="1"/>
</dbReference>
<dbReference type="SUPFAM" id="SSF48008">
    <property type="entry name" value="GntR ligand-binding domain-like"/>
    <property type="match status" value="1"/>
</dbReference>
<dbReference type="SUPFAM" id="SSF46785">
    <property type="entry name" value="Winged helix' DNA-binding domain"/>
    <property type="match status" value="1"/>
</dbReference>
<dbReference type="PROSITE" id="PS50949">
    <property type="entry name" value="HTH_GNTR"/>
    <property type="match status" value="1"/>
</dbReference>
<organism>
    <name type="scientific">Salmonella agona (strain SL483)</name>
    <dbReference type="NCBI Taxonomy" id="454166"/>
    <lineage>
        <taxon>Bacteria</taxon>
        <taxon>Pseudomonadati</taxon>
        <taxon>Pseudomonadota</taxon>
        <taxon>Gammaproteobacteria</taxon>
        <taxon>Enterobacterales</taxon>
        <taxon>Enterobacteriaceae</taxon>
        <taxon>Salmonella</taxon>
    </lineage>
</organism>
<reference key="1">
    <citation type="journal article" date="2011" name="J. Bacteriol.">
        <title>Comparative genomics of 28 Salmonella enterica isolates: evidence for CRISPR-mediated adaptive sublineage evolution.</title>
        <authorList>
            <person name="Fricke W.F."/>
            <person name="Mammel M.K."/>
            <person name="McDermott P.F."/>
            <person name="Tartera C."/>
            <person name="White D.G."/>
            <person name="Leclerc J.E."/>
            <person name="Ravel J."/>
            <person name="Cebula T.A."/>
        </authorList>
    </citation>
    <scope>NUCLEOTIDE SEQUENCE [LARGE SCALE GENOMIC DNA]</scope>
    <source>
        <strain>SL483</strain>
    </source>
</reference>